<feature type="chain" id="PRO_0000207831" description="Putative type II secretion system protein F">
    <location>
        <begin position="1"/>
        <end position="398"/>
    </location>
</feature>
<feature type="topological domain" description="Cytoplasmic" evidence="2">
    <location>
        <begin position="1"/>
        <end position="164"/>
    </location>
</feature>
<feature type="transmembrane region" description="Helical" evidence="4">
    <location>
        <begin position="165"/>
        <end position="185"/>
    </location>
</feature>
<feature type="topological domain" description="Periplasmic" evidence="2">
    <location>
        <begin position="186"/>
        <end position="216"/>
    </location>
</feature>
<feature type="transmembrane region" description="Helical" evidence="4">
    <location>
        <begin position="217"/>
        <end position="237"/>
    </location>
</feature>
<feature type="topological domain" description="Cytoplasmic" evidence="2">
    <location>
        <begin position="238"/>
        <end position="365"/>
    </location>
</feature>
<feature type="transmembrane region" description="Helical" evidence="4">
    <location>
        <begin position="366"/>
        <end position="386"/>
    </location>
</feature>
<feature type="topological domain" description="Periplasmic" evidence="6">
    <location>
        <begin position="387"/>
        <end position="398"/>
    </location>
</feature>
<feature type="binding site" evidence="1">
    <location>
        <position position="90"/>
    </location>
    <ligand>
        <name>Ca(2+)</name>
        <dbReference type="ChEBI" id="CHEBI:29108"/>
    </ligand>
</feature>
<feature type="binding site" evidence="1">
    <location>
        <position position="144"/>
    </location>
    <ligand>
        <name>Ca(2+)</name>
        <dbReference type="ChEBI" id="CHEBI:29108"/>
    </ligand>
</feature>
<feature type="binding site" evidence="1">
    <location>
        <position position="148"/>
    </location>
    <ligand>
        <name>Ca(2+)</name>
        <dbReference type="ChEBI" id="CHEBI:29108"/>
    </ligand>
</feature>
<feature type="sequence conflict" description="In Ref. 3; AAA69030." evidence="7" ref="3">
    <original>T</original>
    <variation>P</variation>
    <location>
        <position position="270"/>
    </location>
</feature>
<reference key="1">
    <citation type="journal article" date="1997" name="Science">
        <title>The complete genome sequence of Escherichia coli K-12.</title>
        <authorList>
            <person name="Blattner F.R."/>
            <person name="Plunkett G. III"/>
            <person name="Bloch C.A."/>
            <person name="Perna N.T."/>
            <person name="Burland V."/>
            <person name="Riley M."/>
            <person name="Collado-Vides J."/>
            <person name="Glasner J.D."/>
            <person name="Rode C.K."/>
            <person name="Mayhew G.F."/>
            <person name="Gregor J."/>
            <person name="Davis N.W."/>
            <person name="Kirkpatrick H.A."/>
            <person name="Goeden M.A."/>
            <person name="Rose D.J."/>
            <person name="Mau B."/>
            <person name="Shao Y."/>
        </authorList>
    </citation>
    <scope>NUCLEOTIDE SEQUENCE [LARGE SCALE GENOMIC DNA]</scope>
    <source>
        <strain>K12 / MG1655 / ATCC 47076</strain>
    </source>
</reference>
<reference key="2">
    <citation type="journal article" date="2006" name="Mol. Syst. Biol.">
        <title>Highly accurate genome sequences of Escherichia coli K-12 strains MG1655 and W3110.</title>
        <authorList>
            <person name="Hayashi K."/>
            <person name="Morooka N."/>
            <person name="Yamamoto Y."/>
            <person name="Fujita K."/>
            <person name="Isono K."/>
            <person name="Choi S."/>
            <person name="Ohtsubo E."/>
            <person name="Baba T."/>
            <person name="Wanner B.L."/>
            <person name="Mori H."/>
            <person name="Horiuchi T."/>
        </authorList>
    </citation>
    <scope>NUCLEOTIDE SEQUENCE [LARGE SCALE GENOMIC DNA]</scope>
    <source>
        <strain>K12 / W3110 / ATCC 27325 / DSM 5911</strain>
    </source>
</reference>
<reference key="3">
    <citation type="journal article" date="1995" name="J. Bacteriol.">
        <title>Identification of the hopG gene, a component of Escherichia coli K-12 type II export system, and its conservation among different pathogenic Escherichia coli and Shigella isolates.</title>
        <authorList>
            <person name="Stojiljkovic I."/>
            <person name="Schoenherr R."/>
            <person name="Kusters J.G."/>
        </authorList>
    </citation>
    <scope>NUCLEOTIDE SEQUENCE [GENOMIC DNA] OF 195-398</scope>
    <source>
        <strain>K12</strain>
    </source>
</reference>
<reference key="4">
    <citation type="journal article" date="1996" name="J. Bacteriol.">
        <title>The cryptic general secretory pathway (gsp) operon of Escherichia coli K-12 encodes functional proteins.</title>
        <authorList>
            <person name="Francetic O."/>
            <person name="Pugsley A.P."/>
        </authorList>
    </citation>
    <scope>LACK OF EXPRESSION</scope>
    <scope>GENE NAME</scope>
    <source>
        <strain>K12 / MC4100 / ATCC 35695 / DSM 6574</strain>
    </source>
</reference>
<reference key="5">
    <citation type="journal article" date="2000" name="EMBO J.">
        <title>Expression of the endogenous type II secretion pathway in Escherichia coli leads to chitinase secretion.</title>
        <authorList>
            <person name="Francetic O."/>
            <person name="Belin D."/>
            <person name="Badaut C."/>
            <person name="Pugsley A.P."/>
        </authorList>
    </citation>
    <scope>LACK OF EXPRESSION</scope>
    <scope>TRANSCRIPTIONAL REGULATION</scope>
    <source>
        <strain>K12 / MC4100 / ATCC 35695 / DSM 6574</strain>
    </source>
</reference>
<reference key="6">
    <citation type="journal article" date="2005" name="Science">
        <title>Global topology analysis of the Escherichia coli inner membrane proteome.</title>
        <authorList>
            <person name="Daley D.O."/>
            <person name="Rapp M."/>
            <person name="Granseth E."/>
            <person name="Melen K."/>
            <person name="Drew D."/>
            <person name="von Heijne G."/>
        </authorList>
    </citation>
    <scope>TOPOLOGY [LARGE SCALE ANALYSIS]</scope>
    <source>
        <strain>K12 / MG1655 / ATCC 47076</strain>
    </source>
</reference>
<evidence type="ECO:0000250" key="1">
    <source>
        <dbReference type="UniProtKB" id="P45780"/>
    </source>
</evidence>
<evidence type="ECO:0000250" key="2">
    <source>
        <dbReference type="UniProtKB" id="Q00513"/>
    </source>
</evidence>
<evidence type="ECO:0000250" key="3">
    <source>
        <dbReference type="UniProtKB" id="Q00514"/>
    </source>
</evidence>
<evidence type="ECO:0000255" key="4"/>
<evidence type="ECO:0000269" key="5">
    <source>
    </source>
</evidence>
<evidence type="ECO:0000269" key="6">
    <source>
    </source>
</evidence>
<evidence type="ECO:0000305" key="7"/>
<organism>
    <name type="scientific">Escherichia coli (strain K12)</name>
    <dbReference type="NCBI Taxonomy" id="83333"/>
    <lineage>
        <taxon>Bacteria</taxon>
        <taxon>Pseudomonadati</taxon>
        <taxon>Pseudomonadota</taxon>
        <taxon>Gammaproteobacteria</taxon>
        <taxon>Enterobacterales</taxon>
        <taxon>Enterobacteriaceae</taxon>
        <taxon>Escherichia</taxon>
    </lineage>
</organism>
<proteinExistence type="evidence at protein level"/>
<name>GSPF_ECOLI</name>
<comment type="function">
    <text evidence="3">Component of the type II secretion system inner membrane complex required for the energy-dependent secretion of extracellular factors such as proteases and toxins from the periplasm.</text>
</comment>
<comment type="subunit">
    <text evidence="1 2 3">Type II secretion system is composed of four main components: the outer membrane complex, the inner membrane complex, the cytoplasmic secretion ATPase and the periplasm-spanning pseudopilus (By similarity). Homodimer (By similarity). Interacts with GspE and GspL components (By similarity).</text>
</comment>
<comment type="subcellular location">
    <subcellularLocation>
        <location>Cell inner membrane</location>
        <topology>Multi-pass membrane protein</topology>
    </subcellularLocation>
</comment>
<comment type="induction">
    <text evidence="5">Silenced by the DNA-binding protein H-NS under standard growth conditions.</text>
</comment>
<comment type="miscellaneous">
    <text>Part of a cryptic operon that encodes proteins involved in type II secretion machinery in other organisms, but is not expressed in strain K12.</text>
</comment>
<comment type="similarity">
    <text evidence="7">Belongs to the GSP F family.</text>
</comment>
<protein>
    <recommendedName>
        <fullName>Putative type II secretion system protein F</fullName>
        <shortName>T2SS protein F</shortName>
    </recommendedName>
    <alternativeName>
        <fullName>General secretion pathway protein F</fullName>
    </alternativeName>
    <alternativeName>
        <fullName>Protein transport protein HofF</fullName>
    </alternativeName>
</protein>
<gene>
    <name type="primary">gspF</name>
    <name type="synonym">hofF</name>
    <name type="synonym">hopF</name>
    <name type="ordered locus">b3327</name>
    <name type="ordered locus">JW3289</name>
</gene>
<accession>P41441</accession>
<accession>Q2M6Z2</accession>
<keyword id="KW-0106">Calcium</keyword>
<keyword id="KW-0997">Cell inner membrane</keyword>
<keyword id="KW-1003">Cell membrane</keyword>
<keyword id="KW-0472">Membrane</keyword>
<keyword id="KW-0479">Metal-binding</keyword>
<keyword id="KW-0653">Protein transport</keyword>
<keyword id="KW-1185">Reference proteome</keyword>
<keyword id="KW-0812">Transmembrane</keyword>
<keyword id="KW-1133">Transmembrane helix</keyword>
<keyword id="KW-0813">Transport</keyword>
<sequence>MNYRYRAMTQDGQKLQGIIDANDERQARLRLREEGLFLLDIRPQKSSGVKTRRPRISHSELTLFTRQLATLSAAALPLEESLAVIGQQSSNKRLGDVLNQVRSAILEGHPLSDALQHFPTLFDSLYRTLVKAGEKSGLLAPVLEKLADYNENRQKIRSKLIQSLIYPCMLTTVAIGVVIILLTAVVPKITEQFVHMKQQLPLSTRILLGLSDTLQRTGPTLLATVFIVAVGFWLWLKRGNNRHRFHAMLLRVALIGPLICAINSARYLRTLSILQSSGVPLLDGMNLSTESLNNLEIRQRLANAAENVRQGNSIHLSLEQTAIFPPMMLYMVASGEKSGQLGTLMVRAADNQETLQQNRIALTLSIFEPALIITMALIVLFIVVSVLQPLLQLNSMIN</sequence>
<dbReference type="EMBL" id="U18997">
    <property type="protein sequence ID" value="AAA58124.1"/>
    <property type="molecule type" value="Genomic_DNA"/>
</dbReference>
<dbReference type="EMBL" id="U00096">
    <property type="protein sequence ID" value="AAC76352.1"/>
    <property type="molecule type" value="Genomic_DNA"/>
</dbReference>
<dbReference type="EMBL" id="AP009048">
    <property type="protein sequence ID" value="BAE77964.1"/>
    <property type="molecule type" value="Genomic_DNA"/>
</dbReference>
<dbReference type="EMBL" id="U20786">
    <property type="protein sequence ID" value="AAA69030.1"/>
    <property type="molecule type" value="Genomic_DNA"/>
</dbReference>
<dbReference type="PIR" id="B65126">
    <property type="entry name" value="B65126"/>
</dbReference>
<dbReference type="RefSeq" id="NP_417786.1">
    <property type="nucleotide sequence ID" value="NC_000913.3"/>
</dbReference>
<dbReference type="RefSeq" id="WP_001109573.1">
    <property type="nucleotide sequence ID" value="NZ_STEB01000038.1"/>
</dbReference>
<dbReference type="SMR" id="P41441"/>
<dbReference type="BioGRID" id="4262168">
    <property type="interactions" value="120"/>
</dbReference>
<dbReference type="FunCoup" id="P41441">
    <property type="interactions" value="495"/>
</dbReference>
<dbReference type="STRING" id="511145.b3327"/>
<dbReference type="PaxDb" id="511145-b3327"/>
<dbReference type="EnsemblBacteria" id="AAC76352">
    <property type="protein sequence ID" value="AAC76352"/>
    <property type="gene ID" value="b3327"/>
</dbReference>
<dbReference type="GeneID" id="947829"/>
<dbReference type="KEGG" id="ecj:JW3289"/>
<dbReference type="KEGG" id="eco:b3327"/>
<dbReference type="KEGG" id="ecoc:C3026_18075"/>
<dbReference type="PATRIC" id="fig|1411691.4.peg.3404"/>
<dbReference type="EchoBASE" id="EB2722"/>
<dbReference type="eggNOG" id="COG1459">
    <property type="taxonomic scope" value="Bacteria"/>
</dbReference>
<dbReference type="HOGENOM" id="CLU_035032_0_1_6"/>
<dbReference type="InParanoid" id="P41441"/>
<dbReference type="OMA" id="SMAEFPH"/>
<dbReference type="OrthoDB" id="9805682at2"/>
<dbReference type="PhylomeDB" id="P41441"/>
<dbReference type="BioCyc" id="EcoCyc:G7705-MONOMER"/>
<dbReference type="BioCyc" id="MetaCyc:G7705-MONOMER"/>
<dbReference type="PRO" id="PR:P41441"/>
<dbReference type="Proteomes" id="UP000000625">
    <property type="component" value="Chromosome"/>
</dbReference>
<dbReference type="GO" id="GO:0005886">
    <property type="term" value="C:plasma membrane"/>
    <property type="evidence" value="ECO:0000314"/>
    <property type="project" value="EcoCyc"/>
</dbReference>
<dbReference type="GO" id="GO:0015627">
    <property type="term" value="C:type II protein secretion system complex"/>
    <property type="evidence" value="ECO:0007669"/>
    <property type="project" value="InterPro"/>
</dbReference>
<dbReference type="GO" id="GO:0046872">
    <property type="term" value="F:metal ion binding"/>
    <property type="evidence" value="ECO:0007669"/>
    <property type="project" value="UniProtKB-KW"/>
</dbReference>
<dbReference type="GO" id="GO:0015628">
    <property type="term" value="P:protein secretion by the type II secretion system"/>
    <property type="evidence" value="ECO:0000318"/>
    <property type="project" value="GO_Central"/>
</dbReference>
<dbReference type="FunFam" id="1.20.81.30:FF:000001">
    <property type="entry name" value="Type II secretion system protein F"/>
    <property type="match status" value="2"/>
</dbReference>
<dbReference type="Gene3D" id="1.20.81.30">
    <property type="entry name" value="Type II secretion system (T2SS), domain F"/>
    <property type="match status" value="2"/>
</dbReference>
<dbReference type="InterPro" id="IPR003004">
    <property type="entry name" value="GspF/PilC"/>
</dbReference>
<dbReference type="InterPro" id="IPR011850">
    <property type="entry name" value="T2SS_GspF"/>
</dbReference>
<dbReference type="InterPro" id="IPR001992">
    <property type="entry name" value="T2SS_GspF/T4SS_PilC_CS"/>
</dbReference>
<dbReference type="InterPro" id="IPR018076">
    <property type="entry name" value="T2SS_GspF_dom"/>
</dbReference>
<dbReference type="InterPro" id="IPR042094">
    <property type="entry name" value="T2SS_GspF_sf"/>
</dbReference>
<dbReference type="NCBIfam" id="TIGR02120">
    <property type="entry name" value="GspF"/>
    <property type="match status" value="1"/>
</dbReference>
<dbReference type="PANTHER" id="PTHR30012">
    <property type="entry name" value="GENERAL SECRETION PATHWAY PROTEIN"/>
    <property type="match status" value="1"/>
</dbReference>
<dbReference type="PANTHER" id="PTHR30012:SF0">
    <property type="entry name" value="TYPE II SECRETION SYSTEM PROTEIN F-RELATED"/>
    <property type="match status" value="1"/>
</dbReference>
<dbReference type="Pfam" id="PF00482">
    <property type="entry name" value="T2SSF"/>
    <property type="match status" value="2"/>
</dbReference>
<dbReference type="PRINTS" id="PR00812">
    <property type="entry name" value="BCTERIALGSPF"/>
</dbReference>
<dbReference type="PROSITE" id="PS00874">
    <property type="entry name" value="T2SP_F"/>
    <property type="match status" value="1"/>
</dbReference>